<accession>P72042</accession>
<accession>L0TGQ5</accession>
<accession>P72018</accession>
<keyword id="KW-1185">Reference proteome</keyword>
<evidence type="ECO:0000256" key="1">
    <source>
        <dbReference type="SAM" id="MobiDB-lite"/>
    </source>
</evidence>
<dbReference type="EMBL" id="AL123456">
    <property type="protein sequence ID" value="CCP46605.1"/>
    <property type="molecule type" value="Genomic_DNA"/>
</dbReference>
<dbReference type="PIR" id="D70695">
    <property type="entry name" value="D70695"/>
</dbReference>
<dbReference type="RefSeq" id="NP_218293.1">
    <property type="nucleotide sequence ID" value="NC_000962.3"/>
</dbReference>
<dbReference type="RefSeq" id="WP_003912345.1">
    <property type="nucleotide sequence ID" value="NC_000962.3"/>
</dbReference>
<dbReference type="STRING" id="83332.Rv3776"/>
<dbReference type="PaxDb" id="83332-Rv3776"/>
<dbReference type="DNASU" id="888953"/>
<dbReference type="GeneID" id="888953"/>
<dbReference type="KEGG" id="mtu:Rv3776"/>
<dbReference type="KEGG" id="mtv:RVBD_3776"/>
<dbReference type="TubercuList" id="Rv3776"/>
<dbReference type="eggNOG" id="COG1403">
    <property type="taxonomic scope" value="Bacteria"/>
</dbReference>
<dbReference type="InParanoid" id="P72042"/>
<dbReference type="OrthoDB" id="5242272at2"/>
<dbReference type="PhylomeDB" id="P72042"/>
<dbReference type="Proteomes" id="UP000001584">
    <property type="component" value="Chromosome"/>
</dbReference>
<dbReference type="GO" id="GO:0005886">
    <property type="term" value="C:plasma membrane"/>
    <property type="evidence" value="ECO:0007005"/>
    <property type="project" value="MTBBASE"/>
</dbReference>
<dbReference type="CDD" id="cd00085">
    <property type="entry name" value="HNHc"/>
    <property type="match status" value="1"/>
</dbReference>
<dbReference type="InterPro" id="IPR003870">
    <property type="entry name" value="DUF222"/>
</dbReference>
<dbReference type="InterPro" id="IPR003615">
    <property type="entry name" value="HNH_nuc"/>
</dbReference>
<dbReference type="Pfam" id="PF02720">
    <property type="entry name" value="DUF222"/>
    <property type="match status" value="1"/>
</dbReference>
<dbReference type="SMART" id="SM00507">
    <property type="entry name" value="HNHc"/>
    <property type="match status" value="1"/>
</dbReference>
<reference key="1">
    <citation type="journal article" date="1998" name="Nature">
        <title>Deciphering the biology of Mycobacterium tuberculosis from the complete genome sequence.</title>
        <authorList>
            <person name="Cole S.T."/>
            <person name="Brosch R."/>
            <person name="Parkhill J."/>
            <person name="Garnier T."/>
            <person name="Churcher C.M."/>
            <person name="Harris D.E."/>
            <person name="Gordon S.V."/>
            <person name="Eiglmeier K."/>
            <person name="Gas S."/>
            <person name="Barry C.E. III"/>
            <person name="Tekaia F."/>
            <person name="Badcock K."/>
            <person name="Basham D."/>
            <person name="Brown D."/>
            <person name="Chillingworth T."/>
            <person name="Connor R."/>
            <person name="Davies R.M."/>
            <person name="Devlin K."/>
            <person name="Feltwell T."/>
            <person name="Gentles S."/>
            <person name="Hamlin N."/>
            <person name="Holroyd S."/>
            <person name="Hornsby T."/>
            <person name="Jagels K."/>
            <person name="Krogh A."/>
            <person name="McLean J."/>
            <person name="Moule S."/>
            <person name="Murphy L.D."/>
            <person name="Oliver S."/>
            <person name="Osborne J."/>
            <person name="Quail M.A."/>
            <person name="Rajandream M.A."/>
            <person name="Rogers J."/>
            <person name="Rutter S."/>
            <person name="Seeger K."/>
            <person name="Skelton S."/>
            <person name="Squares S."/>
            <person name="Squares R."/>
            <person name="Sulston J.E."/>
            <person name="Taylor K."/>
            <person name="Whitehead S."/>
            <person name="Barrell B.G."/>
        </authorList>
    </citation>
    <scope>NUCLEOTIDE SEQUENCE [LARGE SCALE GENOMIC DNA]</scope>
    <source>
        <strain>ATCC 25618 / H37Rv</strain>
    </source>
</reference>
<gene>
    <name type="ordered locus">Rv3776</name>
</gene>
<sequence length="519" mass="55692">MFEISLSDPVELRDADDAALLAAIEDCARAEVAAGARRLSAIAELTSRRTGNDQRADWACDGWDCAAAEVAAALTVSHRKASGQMHLSLTLNRLPQVAALFLAGQLSARLVSIIAWRTYLVRDPEALSLLDAALAKHATAWGPLSAPKLEKAIDSWIDRYDPAALRRTRISARSRDLCIGDPDEDAGTAALWGRLFATDAAMLDKRLTQLAHGVCDDDPRTIAQRRADALGALAAGADRLTCGCGNSDCPSSAGNHRQATGVVIHVVADAAALGAAPDPRLSGPEPALAPEAPATPAVKPPAALISGGGVVPAPLLAELIRGGAALSRMRHPGDLRSEPHYRPSAKLAEFVRIRDMTCRFPGCDQPTEFCDIDHTLPYPLGPTHPSNLKCLCRKHHLLKTFWTGWRDVQLPDGTIIWTAPNGHTYTTHPDSRIFLPSWHTTTAALPPAPSPPAIGPTHTLLMPRRRRTRAAELAHRIKRERAHVTQRNKPPPSGGDTAVAEGFEPPDGVSRLSLSRRVH</sequence>
<name>Y3776_MYCTU</name>
<protein>
    <recommendedName>
        <fullName>Uncharacterized protein Rv3776</fullName>
    </recommendedName>
</protein>
<proteinExistence type="predicted"/>
<feature type="chain" id="PRO_0000405540" description="Uncharacterized protein Rv3776">
    <location>
        <begin position="1"/>
        <end position="519"/>
    </location>
</feature>
<feature type="region of interest" description="Disordered" evidence="1">
    <location>
        <begin position="477"/>
        <end position="519"/>
    </location>
</feature>
<feature type="compositionally biased region" description="Basic residues" evidence="1">
    <location>
        <begin position="477"/>
        <end position="486"/>
    </location>
</feature>
<organism>
    <name type="scientific">Mycobacterium tuberculosis (strain ATCC 25618 / H37Rv)</name>
    <dbReference type="NCBI Taxonomy" id="83332"/>
    <lineage>
        <taxon>Bacteria</taxon>
        <taxon>Bacillati</taxon>
        <taxon>Actinomycetota</taxon>
        <taxon>Actinomycetes</taxon>
        <taxon>Mycobacteriales</taxon>
        <taxon>Mycobacteriaceae</taxon>
        <taxon>Mycobacterium</taxon>
        <taxon>Mycobacterium tuberculosis complex</taxon>
    </lineage>
</organism>